<comment type="function">
    <text evidence="1">Catalyzes the oxidation of 5,10-methylenetetrahydrofolate to 5,10-methenyltetrahydrofolate and then the hydrolysis of 5,10-methenyltetrahydrofolate to 10-formyltetrahydrofolate.</text>
</comment>
<comment type="catalytic activity">
    <reaction evidence="1">
        <text>(6R)-5,10-methylene-5,6,7,8-tetrahydrofolate + NADP(+) = (6R)-5,10-methenyltetrahydrofolate + NADPH</text>
        <dbReference type="Rhea" id="RHEA:22812"/>
        <dbReference type="ChEBI" id="CHEBI:15636"/>
        <dbReference type="ChEBI" id="CHEBI:57455"/>
        <dbReference type="ChEBI" id="CHEBI:57783"/>
        <dbReference type="ChEBI" id="CHEBI:58349"/>
        <dbReference type="EC" id="1.5.1.5"/>
    </reaction>
</comment>
<comment type="catalytic activity">
    <reaction evidence="1">
        <text>(6R)-5,10-methenyltetrahydrofolate + H2O = (6R)-10-formyltetrahydrofolate + H(+)</text>
        <dbReference type="Rhea" id="RHEA:23700"/>
        <dbReference type="ChEBI" id="CHEBI:15377"/>
        <dbReference type="ChEBI" id="CHEBI:15378"/>
        <dbReference type="ChEBI" id="CHEBI:57455"/>
        <dbReference type="ChEBI" id="CHEBI:195366"/>
        <dbReference type="EC" id="3.5.4.9"/>
    </reaction>
</comment>
<comment type="pathway">
    <text evidence="1">One-carbon metabolism; tetrahydrofolate interconversion.</text>
</comment>
<comment type="subunit">
    <text evidence="1">Homodimer.</text>
</comment>
<comment type="similarity">
    <text evidence="1">Belongs to the tetrahydrofolate dehydrogenase/cyclohydrolase family.</text>
</comment>
<feature type="chain" id="PRO_0000305816" description="Bifunctional protein FolD">
    <location>
        <begin position="1"/>
        <end position="282"/>
    </location>
</feature>
<feature type="binding site" evidence="1">
    <location>
        <begin position="165"/>
        <end position="167"/>
    </location>
    <ligand>
        <name>NADP(+)</name>
        <dbReference type="ChEBI" id="CHEBI:58349"/>
    </ligand>
</feature>
<feature type="binding site" evidence="1">
    <location>
        <position position="231"/>
    </location>
    <ligand>
        <name>NADP(+)</name>
        <dbReference type="ChEBI" id="CHEBI:58349"/>
    </ligand>
</feature>
<accession>A0Q505</accession>
<dbReference type="EC" id="1.5.1.5" evidence="1"/>
<dbReference type="EC" id="3.5.4.9" evidence="1"/>
<dbReference type="EMBL" id="CP000439">
    <property type="protein sequence ID" value="ABK89320.1"/>
    <property type="molecule type" value="Genomic_DNA"/>
</dbReference>
<dbReference type="RefSeq" id="WP_003038445.1">
    <property type="nucleotide sequence ID" value="NC_008601.1"/>
</dbReference>
<dbReference type="SMR" id="A0Q505"/>
<dbReference type="KEGG" id="ftn:FTN_0417"/>
<dbReference type="KEGG" id="ftx:AW25_1617"/>
<dbReference type="BioCyc" id="FTUL401614:G1G75-436-MONOMER"/>
<dbReference type="UniPathway" id="UPA00193"/>
<dbReference type="Proteomes" id="UP000000762">
    <property type="component" value="Chromosome"/>
</dbReference>
<dbReference type="GO" id="GO:0005829">
    <property type="term" value="C:cytosol"/>
    <property type="evidence" value="ECO:0007669"/>
    <property type="project" value="TreeGrafter"/>
</dbReference>
<dbReference type="GO" id="GO:0004477">
    <property type="term" value="F:methenyltetrahydrofolate cyclohydrolase activity"/>
    <property type="evidence" value="ECO:0007669"/>
    <property type="project" value="UniProtKB-UniRule"/>
</dbReference>
<dbReference type="GO" id="GO:0004488">
    <property type="term" value="F:methylenetetrahydrofolate dehydrogenase (NADP+) activity"/>
    <property type="evidence" value="ECO:0007669"/>
    <property type="project" value="UniProtKB-UniRule"/>
</dbReference>
<dbReference type="GO" id="GO:0000105">
    <property type="term" value="P:L-histidine biosynthetic process"/>
    <property type="evidence" value="ECO:0007669"/>
    <property type="project" value="UniProtKB-KW"/>
</dbReference>
<dbReference type="GO" id="GO:0009086">
    <property type="term" value="P:methionine biosynthetic process"/>
    <property type="evidence" value="ECO:0007669"/>
    <property type="project" value="UniProtKB-KW"/>
</dbReference>
<dbReference type="GO" id="GO:0006164">
    <property type="term" value="P:purine nucleotide biosynthetic process"/>
    <property type="evidence" value="ECO:0007669"/>
    <property type="project" value="UniProtKB-KW"/>
</dbReference>
<dbReference type="GO" id="GO:0035999">
    <property type="term" value="P:tetrahydrofolate interconversion"/>
    <property type="evidence" value="ECO:0007669"/>
    <property type="project" value="UniProtKB-UniRule"/>
</dbReference>
<dbReference type="CDD" id="cd01080">
    <property type="entry name" value="NAD_bind_m-THF_DH_Cyclohyd"/>
    <property type="match status" value="1"/>
</dbReference>
<dbReference type="FunFam" id="3.40.50.10860:FF:000001">
    <property type="entry name" value="Bifunctional protein FolD"/>
    <property type="match status" value="1"/>
</dbReference>
<dbReference type="FunFam" id="3.40.50.720:FF:000094">
    <property type="entry name" value="Bifunctional protein FolD"/>
    <property type="match status" value="1"/>
</dbReference>
<dbReference type="Gene3D" id="3.40.50.10860">
    <property type="entry name" value="Leucine Dehydrogenase, chain A, domain 1"/>
    <property type="match status" value="1"/>
</dbReference>
<dbReference type="Gene3D" id="3.40.50.720">
    <property type="entry name" value="NAD(P)-binding Rossmann-like Domain"/>
    <property type="match status" value="1"/>
</dbReference>
<dbReference type="HAMAP" id="MF_01576">
    <property type="entry name" value="THF_DHG_CYH"/>
    <property type="match status" value="1"/>
</dbReference>
<dbReference type="InterPro" id="IPR046346">
    <property type="entry name" value="Aminoacid_DH-like_N_sf"/>
</dbReference>
<dbReference type="InterPro" id="IPR036291">
    <property type="entry name" value="NAD(P)-bd_dom_sf"/>
</dbReference>
<dbReference type="InterPro" id="IPR000672">
    <property type="entry name" value="THF_DH/CycHdrlase"/>
</dbReference>
<dbReference type="InterPro" id="IPR020630">
    <property type="entry name" value="THF_DH/CycHdrlase_cat_dom"/>
</dbReference>
<dbReference type="InterPro" id="IPR020867">
    <property type="entry name" value="THF_DH/CycHdrlase_CS"/>
</dbReference>
<dbReference type="InterPro" id="IPR020631">
    <property type="entry name" value="THF_DH/CycHdrlase_NAD-bd_dom"/>
</dbReference>
<dbReference type="NCBIfam" id="NF008058">
    <property type="entry name" value="PRK10792.1"/>
    <property type="match status" value="1"/>
</dbReference>
<dbReference type="NCBIfam" id="NF010777">
    <property type="entry name" value="PRK14180.1"/>
    <property type="match status" value="1"/>
</dbReference>
<dbReference type="NCBIfam" id="NF010783">
    <property type="entry name" value="PRK14186.1"/>
    <property type="match status" value="1"/>
</dbReference>
<dbReference type="PANTHER" id="PTHR48099:SF5">
    <property type="entry name" value="C-1-TETRAHYDROFOLATE SYNTHASE, CYTOPLASMIC"/>
    <property type="match status" value="1"/>
</dbReference>
<dbReference type="PANTHER" id="PTHR48099">
    <property type="entry name" value="C-1-TETRAHYDROFOLATE SYNTHASE, CYTOPLASMIC-RELATED"/>
    <property type="match status" value="1"/>
</dbReference>
<dbReference type="Pfam" id="PF00763">
    <property type="entry name" value="THF_DHG_CYH"/>
    <property type="match status" value="1"/>
</dbReference>
<dbReference type="Pfam" id="PF02882">
    <property type="entry name" value="THF_DHG_CYH_C"/>
    <property type="match status" value="1"/>
</dbReference>
<dbReference type="PRINTS" id="PR00085">
    <property type="entry name" value="THFDHDRGNASE"/>
</dbReference>
<dbReference type="SUPFAM" id="SSF53223">
    <property type="entry name" value="Aminoacid dehydrogenase-like, N-terminal domain"/>
    <property type="match status" value="1"/>
</dbReference>
<dbReference type="SUPFAM" id="SSF51735">
    <property type="entry name" value="NAD(P)-binding Rossmann-fold domains"/>
    <property type="match status" value="1"/>
</dbReference>
<dbReference type="PROSITE" id="PS00766">
    <property type="entry name" value="THF_DHG_CYH_1"/>
    <property type="match status" value="1"/>
</dbReference>
<dbReference type="PROSITE" id="PS00767">
    <property type="entry name" value="THF_DHG_CYH_2"/>
    <property type="match status" value="1"/>
</dbReference>
<organism>
    <name type="scientific">Francisella tularensis subsp. novicida (strain U112)</name>
    <dbReference type="NCBI Taxonomy" id="401614"/>
    <lineage>
        <taxon>Bacteria</taxon>
        <taxon>Pseudomonadati</taxon>
        <taxon>Pseudomonadota</taxon>
        <taxon>Gammaproteobacteria</taxon>
        <taxon>Thiotrichales</taxon>
        <taxon>Francisellaceae</taxon>
        <taxon>Francisella</taxon>
    </lineage>
</organism>
<evidence type="ECO:0000255" key="1">
    <source>
        <dbReference type="HAMAP-Rule" id="MF_01576"/>
    </source>
</evidence>
<sequence length="282" mass="30431">MILIDGKSLSKDLKERLATQVQEYKHNTAITPKLVAIIVGNDPASKTYVASKEKACAQVGIDSQVITLPEHTTESELLELIDQLNNDSSVHAILVQLPLPAHINKNNVIYSIKPEKDVDGFHPTNVGRLQLRDKKCLESCTPKGIMTMLREYGIKTEGAYAVVVGASNVVGKPVSQLLLNAKATVTTCHRFTTDLKSHTTKADILIVAVGKPNFITADMVKEGAVVIDVGINHVDGKIVGDVDFAAVKDKVAAITPVPGGVGPMTITELLYNTFQCAQELNR</sequence>
<protein>
    <recommendedName>
        <fullName evidence="1">Bifunctional protein FolD</fullName>
    </recommendedName>
    <domain>
        <recommendedName>
            <fullName evidence="1">Methylenetetrahydrofolate dehydrogenase</fullName>
            <ecNumber evidence="1">1.5.1.5</ecNumber>
        </recommendedName>
    </domain>
    <domain>
        <recommendedName>
            <fullName evidence="1">Methenyltetrahydrofolate cyclohydrolase</fullName>
            <ecNumber evidence="1">3.5.4.9</ecNumber>
        </recommendedName>
    </domain>
</protein>
<name>FOLD_FRATN</name>
<proteinExistence type="inferred from homology"/>
<reference key="1">
    <citation type="journal article" date="2007" name="Genome Biol.">
        <title>Comparison of Francisella tularensis genomes reveals evolutionary events associated with the emergence of human pathogenic strains.</title>
        <authorList>
            <person name="Rohmer L."/>
            <person name="Fong C."/>
            <person name="Abmayr S."/>
            <person name="Wasnick M."/>
            <person name="Larson Freeman T.J."/>
            <person name="Radey M."/>
            <person name="Guina T."/>
            <person name="Svensson K."/>
            <person name="Hayden H.S."/>
            <person name="Jacobs M."/>
            <person name="Gallagher L.A."/>
            <person name="Manoil C."/>
            <person name="Ernst R.K."/>
            <person name="Drees B."/>
            <person name="Buckley D."/>
            <person name="Haugen E."/>
            <person name="Bovee D."/>
            <person name="Zhou Y."/>
            <person name="Chang J."/>
            <person name="Levy R."/>
            <person name="Lim R."/>
            <person name="Gillett W."/>
            <person name="Guenthener D."/>
            <person name="Kang A."/>
            <person name="Shaffer S.A."/>
            <person name="Taylor G."/>
            <person name="Chen J."/>
            <person name="Gallis B."/>
            <person name="D'Argenio D.A."/>
            <person name="Forsman M."/>
            <person name="Olson M.V."/>
            <person name="Goodlett D.R."/>
            <person name="Kaul R."/>
            <person name="Miller S.I."/>
            <person name="Brittnacher M.J."/>
        </authorList>
    </citation>
    <scope>NUCLEOTIDE SEQUENCE [LARGE SCALE GENOMIC DNA]</scope>
    <source>
        <strain>U112</strain>
    </source>
</reference>
<keyword id="KW-0028">Amino-acid biosynthesis</keyword>
<keyword id="KW-0368">Histidine biosynthesis</keyword>
<keyword id="KW-0378">Hydrolase</keyword>
<keyword id="KW-0486">Methionine biosynthesis</keyword>
<keyword id="KW-0511">Multifunctional enzyme</keyword>
<keyword id="KW-0521">NADP</keyword>
<keyword id="KW-0554">One-carbon metabolism</keyword>
<keyword id="KW-0560">Oxidoreductase</keyword>
<keyword id="KW-0658">Purine biosynthesis</keyword>
<gene>
    <name evidence="1" type="primary">folD</name>
    <name type="ordered locus">FTN_0417</name>
</gene>